<reference key="1">
    <citation type="journal article" date="2005" name="DNA Res.">
        <title>Complete genome sequence of the facultative anaerobic magnetotactic bacterium Magnetospirillum sp. strain AMB-1.</title>
        <authorList>
            <person name="Matsunaga T."/>
            <person name="Okamura Y."/>
            <person name="Fukuda Y."/>
            <person name="Wahyudi A.T."/>
            <person name="Murase Y."/>
            <person name="Takeyama H."/>
        </authorList>
    </citation>
    <scope>NUCLEOTIDE SEQUENCE [LARGE SCALE GENOMIC DNA]</scope>
    <source>
        <strain>ATCC 700264 / AMB-1</strain>
    </source>
</reference>
<name>RF2_PARM1</name>
<dbReference type="EMBL" id="AP007255">
    <property type="protein sequence ID" value="BAE51617.1"/>
    <property type="molecule type" value="Genomic_DNA"/>
</dbReference>
<dbReference type="RefSeq" id="WP_011385191.1">
    <property type="nucleotide sequence ID" value="NC_007626.1"/>
</dbReference>
<dbReference type="SMR" id="Q2W3F8"/>
<dbReference type="STRING" id="342108.amb2813"/>
<dbReference type="KEGG" id="mag:amb2813"/>
<dbReference type="HOGENOM" id="CLU_036856_6_0_5"/>
<dbReference type="OrthoDB" id="9806673at2"/>
<dbReference type="Proteomes" id="UP000007058">
    <property type="component" value="Chromosome"/>
</dbReference>
<dbReference type="GO" id="GO:0005737">
    <property type="term" value="C:cytoplasm"/>
    <property type="evidence" value="ECO:0007669"/>
    <property type="project" value="UniProtKB-SubCell"/>
</dbReference>
<dbReference type="GO" id="GO:0016149">
    <property type="term" value="F:translation release factor activity, codon specific"/>
    <property type="evidence" value="ECO:0007669"/>
    <property type="project" value="UniProtKB-UniRule"/>
</dbReference>
<dbReference type="FunFam" id="3.30.160.20:FF:000010">
    <property type="entry name" value="Peptide chain release factor 2"/>
    <property type="match status" value="1"/>
</dbReference>
<dbReference type="Gene3D" id="3.30.160.20">
    <property type="match status" value="1"/>
</dbReference>
<dbReference type="Gene3D" id="3.30.70.1660">
    <property type="match status" value="1"/>
</dbReference>
<dbReference type="Gene3D" id="1.20.58.410">
    <property type="entry name" value="Release factor"/>
    <property type="match status" value="1"/>
</dbReference>
<dbReference type="HAMAP" id="MF_00094">
    <property type="entry name" value="Rel_fac_2"/>
    <property type="match status" value="1"/>
</dbReference>
<dbReference type="InterPro" id="IPR005139">
    <property type="entry name" value="PCRF"/>
</dbReference>
<dbReference type="InterPro" id="IPR000352">
    <property type="entry name" value="Pep_chain_release_fac_I"/>
</dbReference>
<dbReference type="InterPro" id="IPR045853">
    <property type="entry name" value="Pep_chain_release_fac_I_sf"/>
</dbReference>
<dbReference type="InterPro" id="IPR004374">
    <property type="entry name" value="PrfB"/>
</dbReference>
<dbReference type="NCBIfam" id="TIGR00020">
    <property type="entry name" value="prfB"/>
    <property type="match status" value="1"/>
</dbReference>
<dbReference type="PANTHER" id="PTHR43116:SF3">
    <property type="entry name" value="CLASS I PEPTIDE CHAIN RELEASE FACTOR"/>
    <property type="match status" value="1"/>
</dbReference>
<dbReference type="PANTHER" id="PTHR43116">
    <property type="entry name" value="PEPTIDE CHAIN RELEASE FACTOR 2"/>
    <property type="match status" value="1"/>
</dbReference>
<dbReference type="Pfam" id="PF03462">
    <property type="entry name" value="PCRF"/>
    <property type="match status" value="1"/>
</dbReference>
<dbReference type="Pfam" id="PF00472">
    <property type="entry name" value="RF-1"/>
    <property type="match status" value="1"/>
</dbReference>
<dbReference type="SMART" id="SM00937">
    <property type="entry name" value="PCRF"/>
    <property type="match status" value="1"/>
</dbReference>
<dbReference type="SUPFAM" id="SSF75620">
    <property type="entry name" value="Release factor"/>
    <property type="match status" value="1"/>
</dbReference>
<dbReference type="PROSITE" id="PS00745">
    <property type="entry name" value="RF_PROK_I"/>
    <property type="match status" value="1"/>
</dbReference>
<sequence length="371" mass="41729">MRAEIEALAQDIRRSAALLKRHLNWDEALMRLDELNASAENPDLWNDAGAAQKIMRERNELDSAIQGCRALERELADLAELIELGEMEGDQTVIDDAEEQVRALKERAAKMELETLLSGEADHNDCYMEINAGAGGTESQDWAEMLLRMYTRWAEKHGYKVEWLEESAGEQAGIKSATIRILGHNAYGWLKTESGVHRLVRISPYDSAARRHTSFSSAWVYPVIDDTIDIQINESECRIDTYRASGAGGQHINKTDSAVRITHIPTGIAVACQMERSQHQNRARAWDMLRARLYEAELQKREAAAQALEDQKTDIGWGHQIRSYVLQPYQMVKDLRTNVETSDTQGVLDGDLDMFMAASLAARVQGQVDQG</sequence>
<gene>
    <name evidence="1" type="primary">prfB</name>
    <name type="ordered locus">amb2813</name>
</gene>
<proteinExistence type="inferred from homology"/>
<keyword id="KW-0963">Cytoplasm</keyword>
<keyword id="KW-0488">Methylation</keyword>
<keyword id="KW-0648">Protein biosynthesis</keyword>
<evidence type="ECO:0000255" key="1">
    <source>
        <dbReference type="HAMAP-Rule" id="MF_00094"/>
    </source>
</evidence>
<organism>
    <name type="scientific">Paramagnetospirillum magneticum (strain ATCC 700264 / AMB-1)</name>
    <name type="common">Magnetospirillum magneticum</name>
    <dbReference type="NCBI Taxonomy" id="342108"/>
    <lineage>
        <taxon>Bacteria</taxon>
        <taxon>Pseudomonadati</taxon>
        <taxon>Pseudomonadota</taxon>
        <taxon>Alphaproteobacteria</taxon>
        <taxon>Rhodospirillales</taxon>
        <taxon>Magnetospirillaceae</taxon>
        <taxon>Paramagnetospirillum</taxon>
    </lineage>
</organism>
<accession>Q2W3F8</accession>
<feature type="chain" id="PRO_1000004997" description="Peptide chain release factor 2">
    <location>
        <begin position="1"/>
        <end position="371"/>
    </location>
</feature>
<feature type="modified residue" description="N5-methylglutamine" evidence="1">
    <location>
        <position position="250"/>
    </location>
</feature>
<protein>
    <recommendedName>
        <fullName evidence="1">Peptide chain release factor 2</fullName>
        <shortName evidence="1">RF-2</shortName>
    </recommendedName>
</protein>
<comment type="function">
    <text evidence="1">Peptide chain release factor 2 directs the termination of translation in response to the peptide chain termination codons UGA and UAA.</text>
</comment>
<comment type="subcellular location">
    <subcellularLocation>
        <location evidence="1">Cytoplasm</location>
    </subcellularLocation>
</comment>
<comment type="PTM">
    <text evidence="1">Methylated by PrmC. Methylation increases the termination efficiency of RF2.</text>
</comment>
<comment type="similarity">
    <text evidence="1">Belongs to the prokaryotic/mitochondrial release factor family.</text>
</comment>